<gene>
    <name type="primary">cyp133B2</name>
    <name type="ordered locus">XF_0356</name>
</gene>
<name>C1332_XYLFA</name>
<accession>Q9PGE6</accession>
<reference key="1">
    <citation type="journal article" date="2000" name="Nature">
        <title>The genome sequence of the plant pathogen Xylella fastidiosa.</title>
        <authorList>
            <person name="Simpson A.J.G."/>
            <person name="Reinach F.C."/>
            <person name="Arruda P."/>
            <person name="Abreu F.A."/>
            <person name="Acencio M."/>
            <person name="Alvarenga R."/>
            <person name="Alves L.M.C."/>
            <person name="Araya J.E."/>
            <person name="Baia G.S."/>
            <person name="Baptista C.S."/>
            <person name="Barros M.H."/>
            <person name="Bonaccorsi E.D."/>
            <person name="Bordin S."/>
            <person name="Bove J.M."/>
            <person name="Briones M.R.S."/>
            <person name="Bueno M.R.P."/>
            <person name="Camargo A.A."/>
            <person name="Camargo L.E.A."/>
            <person name="Carraro D.M."/>
            <person name="Carrer H."/>
            <person name="Colauto N.B."/>
            <person name="Colombo C."/>
            <person name="Costa F.F."/>
            <person name="Costa M.C.R."/>
            <person name="Costa-Neto C.M."/>
            <person name="Coutinho L.L."/>
            <person name="Cristofani M."/>
            <person name="Dias-Neto E."/>
            <person name="Docena C."/>
            <person name="El-Dorry H."/>
            <person name="Facincani A.P."/>
            <person name="Ferreira A.J.S."/>
            <person name="Ferreira V.C.A."/>
            <person name="Ferro J.A."/>
            <person name="Fraga J.S."/>
            <person name="Franca S.C."/>
            <person name="Franco M.C."/>
            <person name="Frohme M."/>
            <person name="Furlan L.R."/>
            <person name="Garnier M."/>
            <person name="Goldman G.H."/>
            <person name="Goldman M.H.S."/>
            <person name="Gomes S.L."/>
            <person name="Gruber A."/>
            <person name="Ho P.L."/>
            <person name="Hoheisel J.D."/>
            <person name="Junqueira M.L."/>
            <person name="Kemper E.L."/>
            <person name="Kitajima J.P."/>
            <person name="Krieger J.E."/>
            <person name="Kuramae E.E."/>
            <person name="Laigret F."/>
            <person name="Lambais M.R."/>
            <person name="Leite L.C.C."/>
            <person name="Lemos E.G.M."/>
            <person name="Lemos M.V.F."/>
            <person name="Lopes S.A."/>
            <person name="Lopes C.R."/>
            <person name="Machado J.A."/>
            <person name="Machado M.A."/>
            <person name="Madeira A.M.B.N."/>
            <person name="Madeira H.M.F."/>
            <person name="Marino C.L."/>
            <person name="Marques M.V."/>
            <person name="Martins E.A.L."/>
            <person name="Martins E.M.F."/>
            <person name="Matsukuma A.Y."/>
            <person name="Menck C.F.M."/>
            <person name="Miracca E.C."/>
            <person name="Miyaki C.Y."/>
            <person name="Monteiro-Vitorello C.B."/>
            <person name="Moon D.H."/>
            <person name="Nagai M.A."/>
            <person name="Nascimento A.L.T.O."/>
            <person name="Netto L.E.S."/>
            <person name="Nhani A. Jr."/>
            <person name="Nobrega F.G."/>
            <person name="Nunes L.R."/>
            <person name="Oliveira M.A."/>
            <person name="de Oliveira M.C."/>
            <person name="de Oliveira R.C."/>
            <person name="Palmieri D.A."/>
            <person name="Paris A."/>
            <person name="Peixoto B.R."/>
            <person name="Pereira G.A.G."/>
            <person name="Pereira H.A. Jr."/>
            <person name="Pesquero J.B."/>
            <person name="Quaggio R.B."/>
            <person name="Roberto P.G."/>
            <person name="Rodrigues V."/>
            <person name="de Rosa A.J.M."/>
            <person name="de Rosa V.E. Jr."/>
            <person name="de Sa R.G."/>
            <person name="Santelli R.V."/>
            <person name="Sawasaki H.E."/>
            <person name="da Silva A.C.R."/>
            <person name="da Silva A.M."/>
            <person name="da Silva F.R."/>
            <person name="Silva W.A. Jr."/>
            <person name="da Silveira J.F."/>
            <person name="Silvestri M.L.Z."/>
            <person name="Siqueira W.J."/>
            <person name="de Souza A.A."/>
            <person name="de Souza A.P."/>
            <person name="Terenzi M.F."/>
            <person name="Truffi D."/>
            <person name="Tsai S.M."/>
            <person name="Tsuhako M.H."/>
            <person name="Vallada H."/>
            <person name="Van Sluys M.A."/>
            <person name="Verjovski-Almeida S."/>
            <person name="Vettore A.L."/>
            <person name="Zago M.A."/>
            <person name="Zatz M."/>
            <person name="Meidanis J."/>
            <person name="Setubal J.C."/>
        </authorList>
    </citation>
    <scope>NUCLEOTIDE SEQUENCE [LARGE SCALE GENOMIC DNA]</scope>
    <source>
        <strain>9a5c</strain>
    </source>
</reference>
<evidence type="ECO:0000250" key="1"/>
<evidence type="ECO:0000305" key="2"/>
<keyword id="KW-0349">Heme</keyword>
<keyword id="KW-0408">Iron</keyword>
<keyword id="KW-0479">Metal-binding</keyword>
<keyword id="KW-0503">Monooxygenase</keyword>
<keyword id="KW-0560">Oxidoreductase</keyword>
<proteinExistence type="inferred from homology"/>
<protein>
    <recommendedName>
        <fullName>Putative cytochrome P450 133B2</fullName>
        <ecNumber>1.14.-.-</ecNumber>
    </recommendedName>
</protein>
<dbReference type="EC" id="1.14.-.-"/>
<dbReference type="EMBL" id="AE003849">
    <property type="protein sequence ID" value="AAF83166.1"/>
    <property type="molecule type" value="Genomic_DNA"/>
</dbReference>
<dbReference type="PIR" id="E82817">
    <property type="entry name" value="E82817"/>
</dbReference>
<dbReference type="RefSeq" id="WP_010892889.1">
    <property type="nucleotide sequence ID" value="NC_002488.3"/>
</dbReference>
<dbReference type="SMR" id="Q9PGE6"/>
<dbReference type="STRING" id="160492.XF_0356"/>
<dbReference type="KEGG" id="xfa:XF_0356"/>
<dbReference type="eggNOG" id="COG2124">
    <property type="taxonomic scope" value="Bacteria"/>
</dbReference>
<dbReference type="HOGENOM" id="CLU_033716_2_0_6"/>
<dbReference type="Proteomes" id="UP000000812">
    <property type="component" value="Chromosome"/>
</dbReference>
<dbReference type="GO" id="GO:0020037">
    <property type="term" value="F:heme binding"/>
    <property type="evidence" value="ECO:0007669"/>
    <property type="project" value="InterPro"/>
</dbReference>
<dbReference type="GO" id="GO:0005506">
    <property type="term" value="F:iron ion binding"/>
    <property type="evidence" value="ECO:0007669"/>
    <property type="project" value="InterPro"/>
</dbReference>
<dbReference type="GO" id="GO:0004497">
    <property type="term" value="F:monooxygenase activity"/>
    <property type="evidence" value="ECO:0007669"/>
    <property type="project" value="UniProtKB-KW"/>
</dbReference>
<dbReference type="GO" id="GO:0016705">
    <property type="term" value="F:oxidoreductase activity, acting on paired donors, with incorporation or reduction of molecular oxygen"/>
    <property type="evidence" value="ECO:0007669"/>
    <property type="project" value="InterPro"/>
</dbReference>
<dbReference type="CDD" id="cd20625">
    <property type="entry name" value="CYP164-like"/>
    <property type="match status" value="1"/>
</dbReference>
<dbReference type="FunFam" id="1.10.630.10:FF:000018">
    <property type="entry name" value="Cytochrome P450 monooxygenase"/>
    <property type="match status" value="1"/>
</dbReference>
<dbReference type="Gene3D" id="1.10.630.10">
    <property type="entry name" value="Cytochrome P450"/>
    <property type="match status" value="1"/>
</dbReference>
<dbReference type="InterPro" id="IPR001128">
    <property type="entry name" value="Cyt_P450"/>
</dbReference>
<dbReference type="InterPro" id="IPR002397">
    <property type="entry name" value="Cyt_P450_B"/>
</dbReference>
<dbReference type="InterPro" id="IPR017972">
    <property type="entry name" value="Cyt_P450_CS"/>
</dbReference>
<dbReference type="InterPro" id="IPR036396">
    <property type="entry name" value="Cyt_P450_sf"/>
</dbReference>
<dbReference type="PANTHER" id="PTHR46696:SF1">
    <property type="entry name" value="CYTOCHROME P450 YJIB-RELATED"/>
    <property type="match status" value="1"/>
</dbReference>
<dbReference type="PANTHER" id="PTHR46696">
    <property type="entry name" value="P450, PUTATIVE (EUROFUNG)-RELATED"/>
    <property type="match status" value="1"/>
</dbReference>
<dbReference type="Pfam" id="PF00067">
    <property type="entry name" value="p450"/>
    <property type="match status" value="1"/>
</dbReference>
<dbReference type="PRINTS" id="PR00359">
    <property type="entry name" value="BP450"/>
</dbReference>
<dbReference type="SUPFAM" id="SSF48264">
    <property type="entry name" value="Cytochrome P450"/>
    <property type="match status" value="1"/>
</dbReference>
<dbReference type="PROSITE" id="PS00086">
    <property type="entry name" value="CYTOCHROME_P450"/>
    <property type="match status" value="1"/>
</dbReference>
<sequence>MKLADLSSPAFLENPYPLYETLRRQGSFVSIGPNALMTGRYSIVDGLLHNRNMGKSYMESIRVRYGDDALDMPLFQGFNRMFLMLNPPVHTHLRGLVMQAFTGRESESMRPLATDTAHRLIDDFEQKSSVDLVTEFSFPLPMRIICRMMDVDISDAISLSVAVSNIAKVLDPAPMSPDELVHASAAYEELAHYFTRLIELRRAQPGTDLISMLLRAEEEGQKLTHDEIVSNVILLLLGGYETTSNMIGNALIALHRHPKQLARLKSDLSLMPQAILECLRYDGSVQFTMRAAMDDVSIEGDVVPRGTIVFLMLGAANRDPAQFTDPDHLDITRKQGRLQSFGAGVHHCLGYRLALVELECALTVLLERLPHLRLANLDTLSWNQRGNLRGVNALIADLHS</sequence>
<feature type="chain" id="PRO_0000052290" description="Putative cytochrome P450 133B2">
    <location>
        <begin position="1"/>
        <end position="400"/>
    </location>
</feature>
<feature type="binding site" description="axial binding residue" evidence="1">
    <location>
        <position position="348"/>
    </location>
    <ligand>
        <name>heme</name>
        <dbReference type="ChEBI" id="CHEBI:30413"/>
    </ligand>
    <ligandPart>
        <name>Fe</name>
        <dbReference type="ChEBI" id="CHEBI:18248"/>
    </ligandPart>
</feature>
<comment type="cofactor">
    <cofactor evidence="1">
        <name>heme</name>
        <dbReference type="ChEBI" id="CHEBI:30413"/>
    </cofactor>
</comment>
<comment type="similarity">
    <text evidence="2">Belongs to the cytochrome P450 family.</text>
</comment>
<organism>
    <name type="scientific">Xylella fastidiosa (strain 9a5c)</name>
    <dbReference type="NCBI Taxonomy" id="160492"/>
    <lineage>
        <taxon>Bacteria</taxon>
        <taxon>Pseudomonadati</taxon>
        <taxon>Pseudomonadota</taxon>
        <taxon>Gammaproteobacteria</taxon>
        <taxon>Lysobacterales</taxon>
        <taxon>Lysobacteraceae</taxon>
        <taxon>Xylella</taxon>
    </lineage>
</organism>